<sequence>MARSKIALIGAGQIGGTLAHLAGLKELGDVVLFDIVDGVPQGKALDIAESAPVDGFDAKYSGASDYSAIAGADVVIVTAGVPRKPGMSRDDLIGINLKVMEAVGAGIKEHAPDAFVICITNPLDAMVWALQKFSGLPTNKVVGMAGVLDSARFRHFLAEEFGVSVEDVTAFVLGGHGDDMVPLTRYSTVAGVPLTDLVKLGWTTQEKLDAMVERTRKGGGEIVNLLKTGSAFYAPAASAIAMAESYLRDKKRVLPCAAYLDGQYGIDGLYVGVPVVIGENGVERVLEVTFNDDEKAMFEKSVNSVKGLIEACKSVNDKLA</sequence>
<dbReference type="EC" id="1.1.1.37" evidence="1"/>
<dbReference type="EMBL" id="CP001298">
    <property type="protein sequence ID" value="ACK82788.1"/>
    <property type="molecule type" value="Genomic_DNA"/>
</dbReference>
<dbReference type="RefSeq" id="WP_003599890.1">
    <property type="nucleotide sequence ID" value="NC_011757.1"/>
</dbReference>
<dbReference type="SMR" id="B7KVX2"/>
<dbReference type="KEGG" id="mch:Mchl_1925"/>
<dbReference type="HOGENOM" id="CLU_045401_2_1_5"/>
<dbReference type="Proteomes" id="UP000002385">
    <property type="component" value="Chromosome"/>
</dbReference>
<dbReference type="GO" id="GO:0004459">
    <property type="term" value="F:L-lactate dehydrogenase activity"/>
    <property type="evidence" value="ECO:0007669"/>
    <property type="project" value="TreeGrafter"/>
</dbReference>
<dbReference type="GO" id="GO:0030060">
    <property type="term" value="F:L-malate dehydrogenase (NAD+) activity"/>
    <property type="evidence" value="ECO:0007669"/>
    <property type="project" value="UniProtKB-UniRule"/>
</dbReference>
<dbReference type="GO" id="GO:0006089">
    <property type="term" value="P:lactate metabolic process"/>
    <property type="evidence" value="ECO:0007669"/>
    <property type="project" value="TreeGrafter"/>
</dbReference>
<dbReference type="GO" id="GO:0006099">
    <property type="term" value="P:tricarboxylic acid cycle"/>
    <property type="evidence" value="ECO:0007669"/>
    <property type="project" value="UniProtKB-UniRule"/>
</dbReference>
<dbReference type="CDD" id="cd01339">
    <property type="entry name" value="LDH-like_MDH"/>
    <property type="match status" value="1"/>
</dbReference>
<dbReference type="FunFam" id="3.40.50.720:FF:000018">
    <property type="entry name" value="Malate dehydrogenase"/>
    <property type="match status" value="1"/>
</dbReference>
<dbReference type="FunFam" id="3.90.110.10:FF:000004">
    <property type="entry name" value="Malate dehydrogenase"/>
    <property type="match status" value="1"/>
</dbReference>
<dbReference type="Gene3D" id="3.90.110.10">
    <property type="entry name" value="Lactate dehydrogenase/glycoside hydrolase, family 4, C-terminal"/>
    <property type="match status" value="1"/>
</dbReference>
<dbReference type="Gene3D" id="3.40.50.720">
    <property type="entry name" value="NAD(P)-binding Rossmann-like Domain"/>
    <property type="match status" value="1"/>
</dbReference>
<dbReference type="HAMAP" id="MF_00487">
    <property type="entry name" value="Malate_dehydrog_3"/>
    <property type="match status" value="1"/>
</dbReference>
<dbReference type="InterPro" id="IPR001557">
    <property type="entry name" value="L-lactate/malate_DH"/>
</dbReference>
<dbReference type="InterPro" id="IPR022383">
    <property type="entry name" value="Lactate/malate_DH_C"/>
</dbReference>
<dbReference type="InterPro" id="IPR001236">
    <property type="entry name" value="Lactate/malate_DH_N"/>
</dbReference>
<dbReference type="InterPro" id="IPR015955">
    <property type="entry name" value="Lactate_DH/Glyco_Ohase_4_C"/>
</dbReference>
<dbReference type="InterPro" id="IPR011275">
    <property type="entry name" value="Malate_DH_type3"/>
</dbReference>
<dbReference type="InterPro" id="IPR036291">
    <property type="entry name" value="NAD(P)-bd_dom_sf"/>
</dbReference>
<dbReference type="NCBIfam" id="TIGR01763">
    <property type="entry name" value="MalateDH_bact"/>
    <property type="match status" value="1"/>
</dbReference>
<dbReference type="NCBIfam" id="NF004863">
    <property type="entry name" value="PRK06223.1"/>
    <property type="match status" value="1"/>
</dbReference>
<dbReference type="PANTHER" id="PTHR43128">
    <property type="entry name" value="L-2-HYDROXYCARBOXYLATE DEHYDROGENASE (NAD(P)(+))"/>
    <property type="match status" value="1"/>
</dbReference>
<dbReference type="PANTHER" id="PTHR43128:SF16">
    <property type="entry name" value="L-LACTATE DEHYDROGENASE"/>
    <property type="match status" value="1"/>
</dbReference>
<dbReference type="Pfam" id="PF02866">
    <property type="entry name" value="Ldh_1_C"/>
    <property type="match status" value="1"/>
</dbReference>
<dbReference type="Pfam" id="PF00056">
    <property type="entry name" value="Ldh_1_N"/>
    <property type="match status" value="1"/>
</dbReference>
<dbReference type="PIRSF" id="PIRSF000102">
    <property type="entry name" value="Lac_mal_DH"/>
    <property type="match status" value="1"/>
</dbReference>
<dbReference type="PRINTS" id="PR00086">
    <property type="entry name" value="LLDHDRGNASE"/>
</dbReference>
<dbReference type="SUPFAM" id="SSF56327">
    <property type="entry name" value="LDH C-terminal domain-like"/>
    <property type="match status" value="1"/>
</dbReference>
<dbReference type="SUPFAM" id="SSF51735">
    <property type="entry name" value="NAD(P)-binding Rossmann-fold domains"/>
    <property type="match status" value="1"/>
</dbReference>
<keyword id="KW-0520">NAD</keyword>
<keyword id="KW-0560">Oxidoreductase</keyword>
<keyword id="KW-0816">Tricarboxylic acid cycle</keyword>
<gene>
    <name evidence="1" type="primary">mdh</name>
    <name type="ordered locus">Mchl_1925</name>
</gene>
<organism>
    <name type="scientific">Methylorubrum extorquens (strain CM4 / NCIMB 13688)</name>
    <name type="common">Methylobacterium extorquens</name>
    <dbReference type="NCBI Taxonomy" id="440085"/>
    <lineage>
        <taxon>Bacteria</taxon>
        <taxon>Pseudomonadati</taxon>
        <taxon>Pseudomonadota</taxon>
        <taxon>Alphaproteobacteria</taxon>
        <taxon>Hyphomicrobiales</taxon>
        <taxon>Methylobacteriaceae</taxon>
        <taxon>Methylorubrum</taxon>
    </lineage>
</organism>
<protein>
    <recommendedName>
        <fullName evidence="1">Malate dehydrogenase</fullName>
        <ecNumber evidence="1">1.1.1.37</ecNumber>
    </recommendedName>
</protein>
<comment type="function">
    <text evidence="1">Catalyzes the reversible oxidation of malate to oxaloacetate.</text>
</comment>
<comment type="catalytic activity">
    <reaction evidence="1">
        <text>(S)-malate + NAD(+) = oxaloacetate + NADH + H(+)</text>
        <dbReference type="Rhea" id="RHEA:21432"/>
        <dbReference type="ChEBI" id="CHEBI:15378"/>
        <dbReference type="ChEBI" id="CHEBI:15589"/>
        <dbReference type="ChEBI" id="CHEBI:16452"/>
        <dbReference type="ChEBI" id="CHEBI:57540"/>
        <dbReference type="ChEBI" id="CHEBI:57945"/>
        <dbReference type="EC" id="1.1.1.37"/>
    </reaction>
</comment>
<comment type="similarity">
    <text evidence="1">Belongs to the LDH/MDH superfamily. MDH type 3 family.</text>
</comment>
<reference key="1">
    <citation type="submission" date="2008-12" db="EMBL/GenBank/DDBJ databases">
        <title>Complete sequence of chromosome of Methylobacterium chloromethanicum CM4.</title>
        <authorList>
            <consortium name="US DOE Joint Genome Institute"/>
            <person name="Lucas S."/>
            <person name="Copeland A."/>
            <person name="Lapidus A."/>
            <person name="Glavina del Rio T."/>
            <person name="Dalin E."/>
            <person name="Tice H."/>
            <person name="Bruce D."/>
            <person name="Goodwin L."/>
            <person name="Pitluck S."/>
            <person name="Chertkov O."/>
            <person name="Brettin T."/>
            <person name="Detter J.C."/>
            <person name="Han C."/>
            <person name="Larimer F."/>
            <person name="Land M."/>
            <person name="Hauser L."/>
            <person name="Kyrpides N."/>
            <person name="Mikhailova N."/>
            <person name="Marx C."/>
            <person name="Richardson P."/>
        </authorList>
    </citation>
    <scope>NUCLEOTIDE SEQUENCE [LARGE SCALE GENOMIC DNA]</scope>
    <source>
        <strain>CM4 / NCIMB 13688</strain>
    </source>
</reference>
<proteinExistence type="inferred from homology"/>
<accession>B7KVX2</accession>
<name>MDH_METC4</name>
<feature type="chain" id="PRO_1000191649" description="Malate dehydrogenase">
    <location>
        <begin position="1"/>
        <end position="320"/>
    </location>
</feature>
<feature type="active site" description="Proton acceptor" evidence="1">
    <location>
        <position position="176"/>
    </location>
</feature>
<feature type="binding site" evidence="1">
    <location>
        <begin position="10"/>
        <end position="15"/>
    </location>
    <ligand>
        <name>NAD(+)</name>
        <dbReference type="ChEBI" id="CHEBI:57540"/>
    </ligand>
</feature>
<feature type="binding site" evidence="1">
    <location>
        <position position="34"/>
    </location>
    <ligand>
        <name>NAD(+)</name>
        <dbReference type="ChEBI" id="CHEBI:57540"/>
    </ligand>
</feature>
<feature type="binding site" evidence="1">
    <location>
        <position position="83"/>
    </location>
    <ligand>
        <name>substrate</name>
    </ligand>
</feature>
<feature type="binding site" evidence="1">
    <location>
        <position position="89"/>
    </location>
    <ligand>
        <name>substrate</name>
    </ligand>
</feature>
<feature type="binding site" evidence="1">
    <location>
        <position position="96"/>
    </location>
    <ligand>
        <name>NAD(+)</name>
        <dbReference type="ChEBI" id="CHEBI:57540"/>
    </ligand>
</feature>
<feature type="binding site" evidence="1">
    <location>
        <begin position="119"/>
        <end position="121"/>
    </location>
    <ligand>
        <name>NAD(+)</name>
        <dbReference type="ChEBI" id="CHEBI:57540"/>
    </ligand>
</feature>
<feature type="binding site" evidence="1">
    <location>
        <position position="121"/>
    </location>
    <ligand>
        <name>substrate</name>
    </ligand>
</feature>
<feature type="binding site" evidence="1">
    <location>
        <position position="152"/>
    </location>
    <ligand>
        <name>substrate</name>
    </ligand>
</feature>
<evidence type="ECO:0000255" key="1">
    <source>
        <dbReference type="HAMAP-Rule" id="MF_00487"/>
    </source>
</evidence>